<organism>
    <name type="scientific">Rattus norvegicus</name>
    <name type="common">Rat</name>
    <dbReference type="NCBI Taxonomy" id="10116"/>
    <lineage>
        <taxon>Eukaryota</taxon>
        <taxon>Metazoa</taxon>
        <taxon>Chordata</taxon>
        <taxon>Craniata</taxon>
        <taxon>Vertebrata</taxon>
        <taxon>Euteleostomi</taxon>
        <taxon>Mammalia</taxon>
        <taxon>Eutheria</taxon>
        <taxon>Euarchontoglires</taxon>
        <taxon>Glires</taxon>
        <taxon>Rodentia</taxon>
        <taxon>Myomorpha</taxon>
        <taxon>Muroidea</taxon>
        <taxon>Muridae</taxon>
        <taxon>Murinae</taxon>
        <taxon>Rattus</taxon>
    </lineage>
</organism>
<protein>
    <recommendedName>
        <fullName>Testis development-related protein</fullName>
    </recommendedName>
</protein>
<accession>Q498E2</accession>
<name>TDRP_RAT</name>
<evidence type="ECO:0000250" key="1">
    <source>
        <dbReference type="UniProtKB" id="Q8C5P7"/>
    </source>
</evidence>
<evidence type="ECO:0000256" key="2">
    <source>
        <dbReference type="SAM" id="MobiDB-lite"/>
    </source>
</evidence>
<evidence type="ECO:0000269" key="3">
    <source>
    </source>
</evidence>
<evidence type="ECO:0000305" key="4"/>
<evidence type="ECO:0007744" key="5">
    <source>
    </source>
</evidence>
<sequence length="182" mass="20171">MWKLSRSRVLLDEPPEEEDVLRGASPASAAAQAPGASLRGWKEATSLFNKDDEERLLETSRSSKSKGTNVRLKEELKAEKKSGFWDALVLKQNVQPKKPDQMEGWEPPKLTAEDVATDHTEDGISSLPPWSAWEDDTKGSTKYTSLASSASSSRWSLRSAGKLVSIRRQSKGHLTETCEEVE</sequence>
<proteinExistence type="evidence at protein level"/>
<keyword id="KW-0963">Cytoplasm</keyword>
<keyword id="KW-0539">Nucleus</keyword>
<keyword id="KW-0597">Phosphoprotein</keyword>
<keyword id="KW-1185">Reference proteome</keyword>
<gene>
    <name type="primary">Tdrp</name>
</gene>
<reference key="1">
    <citation type="journal article" date="2004" name="Genome Res.">
        <title>The status, quality, and expansion of the NIH full-length cDNA project: the Mammalian Gene Collection (MGC).</title>
        <authorList>
            <consortium name="The MGC Project Team"/>
        </authorList>
    </citation>
    <scope>NUCLEOTIDE SEQUENCE [LARGE SCALE MRNA]</scope>
    <source>
        <tissue>Testis</tissue>
    </source>
</reference>
<reference key="2">
    <citation type="journal article" date="2006" name="Proc. Natl. Acad. Sci. U.S.A.">
        <title>Quantitative phosphoproteomics of vasopressin-sensitive renal cells: regulation of aquaporin-2 phosphorylation at two sites.</title>
        <authorList>
            <person name="Hoffert J.D."/>
            <person name="Pisitkun T."/>
            <person name="Wang G."/>
            <person name="Shen R.-F."/>
            <person name="Knepper M.A."/>
        </authorList>
    </citation>
    <scope>PHOSPHORYLATION [LARGE SCALE ANALYSIS] AT SER-7</scope>
    <scope>IDENTIFICATION BY MASS SPECTROMETRY [LARGE SCALE ANALYSIS]</scope>
</reference>
<reference key="3">
    <citation type="journal article" date="2010" name="Biochem. Biophys. Res. Commun.">
        <title>Molecular cloning of a novel nuclear factor, TDRP1, in spermatogenic cells of testis and its relationship with spermatogenesis.</title>
        <authorList>
            <person name="Wang X."/>
            <person name="Jiang H."/>
            <person name="Zhou W."/>
            <person name="Zhang Z."/>
            <person name="Yang Z."/>
            <person name="Lu Y."/>
            <person name="Lu B."/>
            <person name="Wang X."/>
            <person name="Ding Q."/>
            <person name="Hu R."/>
        </authorList>
    </citation>
    <scope>SUBCELLULAR LOCATION</scope>
    <scope>TISSUE SPECIFICITY</scope>
    <scope>DEVELOPMENTAL STAGE</scope>
</reference>
<comment type="function">
    <text evidence="1">Contributes to normal sperm motility, but not essential for male fertility.</text>
</comment>
<comment type="subunit">
    <text evidence="1">Interacts with PRM2.</text>
</comment>
<comment type="subcellular location">
    <subcellularLocation>
        <location evidence="3">Nucleus</location>
    </subcellularLocation>
    <subcellularLocation>
        <location evidence="3">Cytoplasm</location>
    </subcellularLocation>
    <text evidence="1">Mainly nuclear. Also detected in cytoplasm near the midpiece of the flagellum.</text>
</comment>
<comment type="tissue specificity">
    <text evidence="3">Predominantly expressed in testis.</text>
</comment>
<comment type="developmental stage">
    <text evidence="3">In testis: weakly expressed in newborns, increases remarkably at 3 weeks postpartum, and peaks at 2 months postpartum (at protein level).</text>
</comment>
<comment type="similarity">
    <text evidence="4">Belongs to the TDRP family.</text>
</comment>
<comment type="sequence caution" evidence="4">
    <conflict type="erroneous initiation">
        <sequence resource="EMBL-CDS" id="AAI00252"/>
    </conflict>
    <text>Extended N-terminus.</text>
</comment>
<feature type="chain" id="PRO_0000308221" description="Testis development-related protein">
    <location>
        <begin position="1"/>
        <end position="182"/>
    </location>
</feature>
<feature type="region of interest" description="Disordered" evidence="2">
    <location>
        <begin position="1"/>
        <end position="71"/>
    </location>
</feature>
<feature type="region of interest" description="Disordered" evidence="2">
    <location>
        <begin position="117"/>
        <end position="152"/>
    </location>
</feature>
<feature type="compositionally biased region" description="Low complexity" evidence="2">
    <location>
        <begin position="22"/>
        <end position="37"/>
    </location>
</feature>
<feature type="compositionally biased region" description="Basic and acidic residues" evidence="2">
    <location>
        <begin position="49"/>
        <end position="58"/>
    </location>
</feature>
<feature type="compositionally biased region" description="Polar residues" evidence="2">
    <location>
        <begin position="59"/>
        <end position="68"/>
    </location>
</feature>
<feature type="modified residue" description="Phosphoserine" evidence="5">
    <location>
        <position position="7"/>
    </location>
</feature>
<dbReference type="EMBL" id="BC100251">
    <property type="protein sequence ID" value="AAI00252.1"/>
    <property type="status" value="ALT_INIT"/>
    <property type="molecule type" value="mRNA"/>
</dbReference>
<dbReference type="RefSeq" id="NP_001094261.1">
    <property type="nucleotide sequence ID" value="NM_001100791.2"/>
</dbReference>
<dbReference type="RefSeq" id="XP_063131721.1">
    <property type="nucleotide sequence ID" value="XM_063275651.1"/>
</dbReference>
<dbReference type="FunCoup" id="Q498E2">
    <property type="interactions" value="380"/>
</dbReference>
<dbReference type="STRING" id="10116.ENSRNOP00000069082"/>
<dbReference type="iPTMnet" id="Q498E2"/>
<dbReference type="PhosphoSitePlus" id="Q498E2"/>
<dbReference type="jPOST" id="Q498E2"/>
<dbReference type="PaxDb" id="10116-ENSRNOP00000028935"/>
<dbReference type="GeneID" id="498662"/>
<dbReference type="KEGG" id="rno:498662"/>
<dbReference type="AGR" id="RGD:1559733"/>
<dbReference type="CTD" id="157695"/>
<dbReference type="RGD" id="1559733">
    <property type="gene designation" value="Tdrp"/>
</dbReference>
<dbReference type="VEuPathDB" id="HostDB:ENSRNOG00000027245"/>
<dbReference type="eggNOG" id="ENOG502RYNW">
    <property type="taxonomic scope" value="Eukaryota"/>
</dbReference>
<dbReference type="HOGENOM" id="CLU_094260_0_0_1"/>
<dbReference type="InParanoid" id="Q498E2"/>
<dbReference type="PhylomeDB" id="Q498E2"/>
<dbReference type="TreeFam" id="TF335521"/>
<dbReference type="PRO" id="PR:Q498E2"/>
<dbReference type="Proteomes" id="UP000002494">
    <property type="component" value="Chromosome 16"/>
</dbReference>
<dbReference type="Bgee" id="ENSRNOG00000027245">
    <property type="expression patterns" value="Expressed in testis and 19 other cell types or tissues"/>
</dbReference>
<dbReference type="ExpressionAtlas" id="Q498E2">
    <property type="expression patterns" value="baseline and differential"/>
</dbReference>
<dbReference type="GO" id="GO:0005737">
    <property type="term" value="C:cytoplasm"/>
    <property type="evidence" value="ECO:0000266"/>
    <property type="project" value="RGD"/>
</dbReference>
<dbReference type="GO" id="GO:0005829">
    <property type="term" value="C:cytosol"/>
    <property type="evidence" value="ECO:0000318"/>
    <property type="project" value="GO_Central"/>
</dbReference>
<dbReference type="GO" id="GO:0005634">
    <property type="term" value="C:nucleus"/>
    <property type="evidence" value="ECO:0000266"/>
    <property type="project" value="RGD"/>
</dbReference>
<dbReference type="GO" id="GO:0007283">
    <property type="term" value="P:spermatogenesis"/>
    <property type="evidence" value="ECO:0000266"/>
    <property type="project" value="RGD"/>
</dbReference>
<dbReference type="InterPro" id="IPR031399">
    <property type="entry name" value="TDRP"/>
</dbReference>
<dbReference type="PANTHER" id="PTHR35663:SF1">
    <property type="entry name" value="TESTIS DEVELOPMENT-RELATED PROTEIN"/>
    <property type="match status" value="1"/>
</dbReference>
<dbReference type="PANTHER" id="PTHR35663">
    <property type="entry name" value="TESTIS DEVELOPMENT-RELATED PROTEIN-RELATED"/>
    <property type="match status" value="1"/>
</dbReference>
<dbReference type="Pfam" id="PF15683">
    <property type="entry name" value="TDRP"/>
    <property type="match status" value="1"/>
</dbReference>